<evidence type="ECO:0000250" key="1">
    <source>
        <dbReference type="UniProtKB" id="P84921"/>
    </source>
</evidence>
<evidence type="ECO:0000255" key="2"/>
<evidence type="ECO:0000269" key="3">
    <source>
    </source>
</evidence>
<evidence type="ECO:0000303" key="4">
    <source>
    </source>
</evidence>
<evidence type="ECO:0000305" key="5"/>
<proteinExistence type="evidence at protein level"/>
<sequence length="29" mass="2969">GLWKSLLKNVGKAAGKAALNAVTDMVNQA</sequence>
<keyword id="KW-0878">Amphibian defense peptide</keyword>
<keyword id="KW-0044">Antibiotic</keyword>
<keyword id="KW-0929">Antimicrobial</keyword>
<keyword id="KW-0903">Direct protein sequencing</keyword>
<keyword id="KW-0964">Secreted</keyword>
<feature type="peptide" id="PRO_0000404617" description="Dermaseptin-J8" evidence="3">
    <location>
        <begin position="1"/>
        <end position="29"/>
    </location>
</feature>
<feature type="unsure residue" description="L or I" evidence="3">
    <location>
        <position position="2"/>
    </location>
</feature>
<feature type="unsure residue" description="K or Q" evidence="3">
    <location>
        <position position="4"/>
    </location>
</feature>
<feature type="unsure residue" description="L or I" evidence="3">
    <location>
        <position position="6"/>
    </location>
</feature>
<feature type="unsure residue" description="L or I" evidence="3">
    <location>
        <position position="7"/>
    </location>
</feature>
<feature type="unsure residue" description="K or Q" evidence="3">
    <location>
        <position position="8"/>
    </location>
</feature>
<feature type="unsure residue" description="K or Q" evidence="3">
    <location>
        <position position="12"/>
    </location>
</feature>
<feature type="unsure residue" description="K or Q" evidence="3">
    <location>
        <position position="16"/>
    </location>
</feature>
<feature type="unsure residue" description="L or I" evidence="3">
    <location>
        <position position="19"/>
    </location>
</feature>
<feature type="unsure residue" description="Q or K" evidence="3">
    <location>
        <position position="28"/>
    </location>
</feature>
<accession>P86640</accession>
<organism>
    <name type="scientific">Phasmahyla jandaia</name>
    <name type="common">Jandaia leaf frog</name>
    <name type="synonym">Phyllomedusa jandaia</name>
    <dbReference type="NCBI Taxonomy" id="762504"/>
    <lineage>
        <taxon>Eukaryota</taxon>
        <taxon>Metazoa</taxon>
        <taxon>Chordata</taxon>
        <taxon>Craniata</taxon>
        <taxon>Vertebrata</taxon>
        <taxon>Euteleostomi</taxon>
        <taxon>Amphibia</taxon>
        <taxon>Batrachia</taxon>
        <taxon>Anura</taxon>
        <taxon>Neobatrachia</taxon>
        <taxon>Hyloidea</taxon>
        <taxon>Hylidae</taxon>
        <taxon>Phyllomedusinae</taxon>
        <taxon>Phasmahyla</taxon>
    </lineage>
</organism>
<dbReference type="SMR" id="P86640"/>
<dbReference type="GO" id="GO:0005576">
    <property type="term" value="C:extracellular region"/>
    <property type="evidence" value="ECO:0007669"/>
    <property type="project" value="UniProtKB-SubCell"/>
</dbReference>
<dbReference type="GO" id="GO:0042742">
    <property type="term" value="P:defense response to bacterium"/>
    <property type="evidence" value="ECO:0007669"/>
    <property type="project" value="UniProtKB-KW"/>
</dbReference>
<dbReference type="InterPro" id="IPR022731">
    <property type="entry name" value="Dermaseptin_dom"/>
</dbReference>
<dbReference type="Pfam" id="PF12121">
    <property type="entry name" value="DD_K"/>
    <property type="match status" value="1"/>
</dbReference>
<comment type="function">
    <text evidence="1">Has antimicrobial activity.</text>
</comment>
<comment type="subcellular location">
    <subcellularLocation>
        <location evidence="3">Secreted</location>
    </subcellularLocation>
</comment>
<comment type="tissue specificity">
    <text evidence="3">Expressed by the skin glands.</text>
</comment>
<comment type="mass spectrometry" mass="2967.5" method="MALDI" evidence="3"/>
<comment type="similarity">
    <text evidence="2">Belongs to the frog skin active peptide (FSAP) family. Dermaseptin subfamily.</text>
</comment>
<reference evidence="5" key="1">
    <citation type="journal article" date="2011" name="Toxicon">
        <title>Peptidomic dissection of the skin secretion of Phasmahyla jandaia (Bokermann and Sazima, 1978) (Anura, Hylidae, Phyllomedusinae).</title>
        <authorList>
            <person name="Rates B."/>
            <person name="Silva L.P."/>
            <person name="Ireno I.C."/>
            <person name="Leite F.S."/>
            <person name="Borges M.H."/>
            <person name="Bloch C. Jr."/>
            <person name="De Lima M.E."/>
            <person name="Pimenta A.M."/>
        </authorList>
    </citation>
    <scope>PROTEIN SEQUENCE</scope>
    <scope>SUBCELLULAR LOCATION</scope>
    <scope>TISSUE SPECIFICITY</scope>
    <scope>MASS SPECTROMETRY</scope>
    <source>
        <tissue evidence="3">Skin secretion</tissue>
    </source>
</reference>
<protein>
    <recommendedName>
        <fullName evidence="4">Dermaseptin-J8</fullName>
        <shortName evidence="4">DRS-J8</shortName>
    </recommendedName>
</protein>
<name>DMS8_PHAJA</name>